<organism>
    <name type="scientific">Caulobacter vibrioides (strain ATCC 19089 / CIP 103742 / CB 15)</name>
    <name type="common">Caulobacter crescentus</name>
    <dbReference type="NCBI Taxonomy" id="190650"/>
    <lineage>
        <taxon>Bacteria</taxon>
        <taxon>Pseudomonadati</taxon>
        <taxon>Pseudomonadota</taxon>
        <taxon>Alphaproteobacteria</taxon>
        <taxon>Caulobacterales</taxon>
        <taxon>Caulobacteraceae</taxon>
        <taxon>Caulobacter</taxon>
    </lineage>
</organism>
<comment type="function">
    <text evidence="1">Produces ATP from ADP in the presence of a proton gradient across the membrane. The alpha chain is a regulatory subunit.</text>
</comment>
<comment type="catalytic activity">
    <reaction evidence="1">
        <text>ATP + H2O + 4 H(+)(in) = ADP + phosphate + 5 H(+)(out)</text>
        <dbReference type="Rhea" id="RHEA:57720"/>
        <dbReference type="ChEBI" id="CHEBI:15377"/>
        <dbReference type="ChEBI" id="CHEBI:15378"/>
        <dbReference type="ChEBI" id="CHEBI:30616"/>
        <dbReference type="ChEBI" id="CHEBI:43474"/>
        <dbReference type="ChEBI" id="CHEBI:456216"/>
        <dbReference type="EC" id="7.1.2.2"/>
    </reaction>
</comment>
<comment type="subunit">
    <text evidence="1">F-type ATPases have 2 components, CF(1) - the catalytic core - and CF(0) - the membrane proton channel. CF(1) has five subunits: alpha(3), beta(3), gamma(1), delta(1), epsilon(1). CF(0) has three main subunits: a(1), b(2) and c(9-12). The alpha and beta chains form an alternating ring which encloses part of the gamma chain. CF(1) is attached to CF(0) by a central stalk formed by the gamma and epsilon chains, while a peripheral stalk is formed by the delta and b chains.</text>
</comment>
<comment type="subcellular location">
    <subcellularLocation>
        <location evidence="1">Cell inner membrane</location>
        <topology evidence="1">Peripheral membrane protein</topology>
    </subcellularLocation>
</comment>
<comment type="similarity">
    <text evidence="1">Belongs to the ATPase alpha/beta chains family.</text>
</comment>
<proteinExistence type="inferred from homology"/>
<feature type="chain" id="PRO_0000238229" description="ATP synthase subunit alpha">
    <location>
        <begin position="1"/>
        <end position="510"/>
    </location>
</feature>
<feature type="binding site" evidence="1">
    <location>
        <begin position="170"/>
        <end position="177"/>
    </location>
    <ligand>
        <name>ATP</name>
        <dbReference type="ChEBI" id="CHEBI:30616"/>
    </ligand>
</feature>
<feature type="site" description="Required for activity" evidence="1">
    <location>
        <position position="371"/>
    </location>
</feature>
<gene>
    <name evidence="1" type="primary">atpA</name>
    <name type="ordered locus">CC_3449</name>
</gene>
<sequence length="510" mass="55294">MDIRAAEISAILKSQIANFGEEAAVSDVGQVLSVGDGIARIYGLDNVQAGEMLEFPKAGVKGMALNLERDNVGAVIFGQDQEIKEGDEVRRLGEIVDVPVGRGLLGRVVNPLGEPIDGKGPIQYTERRRVDVKAPGIIPRKSVHEPVQTGLKSIDTLIPVGRGQRELIIGDRQTGKTAVAIDTILNQKAVNAGKDESAKLYCVYVAIGQKRSTVAQIVKTLEEHGALEYTTVVVASASEPAPLQYLAPFAGCAMGEWFRDNGLHGLIIYDDLSKQAVAYRQMSLLLRRPPGREAYPGDVFYLHSRLLERAAKLNEDNGSGSLTALPIIETQANDVSAYIPTNVISITDGQIFLETDLFYQGIRPAVNVGISVSRVGSSAQIKAMKQVAGPIKGELAQYREMAAFAKFGSDLDASTQKMLARGERLTELLKQPQYAPLSVEEQVCVIYAGTRGYLDGIPTSSVRRFEAEFLARLHSQHADLLEGIRTKKALDKDLENTLKSALDSFSSTFA</sequence>
<dbReference type="EC" id="7.1.2.2" evidence="1"/>
<dbReference type="EMBL" id="AE005673">
    <property type="protein sequence ID" value="AAK25411.1"/>
    <property type="molecule type" value="Genomic_DNA"/>
</dbReference>
<dbReference type="PIR" id="G87676">
    <property type="entry name" value="G87676"/>
</dbReference>
<dbReference type="RefSeq" id="NP_422243.1">
    <property type="nucleotide sequence ID" value="NC_002696.2"/>
</dbReference>
<dbReference type="RefSeq" id="WP_010921278.1">
    <property type="nucleotide sequence ID" value="NC_002696.2"/>
</dbReference>
<dbReference type="SMR" id="Q9A2V7"/>
<dbReference type="STRING" id="190650.CC_3449"/>
<dbReference type="EnsemblBacteria" id="AAK25411">
    <property type="protein sequence ID" value="AAK25411"/>
    <property type="gene ID" value="CC_3449"/>
</dbReference>
<dbReference type="KEGG" id="ccr:CC_3449"/>
<dbReference type="PATRIC" id="fig|190650.5.peg.3459"/>
<dbReference type="eggNOG" id="COG0056">
    <property type="taxonomic scope" value="Bacteria"/>
</dbReference>
<dbReference type="HOGENOM" id="CLU_010091_2_1_5"/>
<dbReference type="BioCyc" id="CAULO:CC3449-MONOMER"/>
<dbReference type="Proteomes" id="UP000001816">
    <property type="component" value="Chromosome"/>
</dbReference>
<dbReference type="GO" id="GO:0005886">
    <property type="term" value="C:plasma membrane"/>
    <property type="evidence" value="ECO:0007669"/>
    <property type="project" value="UniProtKB-SubCell"/>
</dbReference>
<dbReference type="GO" id="GO:0045259">
    <property type="term" value="C:proton-transporting ATP synthase complex"/>
    <property type="evidence" value="ECO:0007669"/>
    <property type="project" value="UniProtKB-KW"/>
</dbReference>
<dbReference type="GO" id="GO:0043531">
    <property type="term" value="F:ADP binding"/>
    <property type="evidence" value="ECO:0007669"/>
    <property type="project" value="TreeGrafter"/>
</dbReference>
<dbReference type="GO" id="GO:0005524">
    <property type="term" value="F:ATP binding"/>
    <property type="evidence" value="ECO:0007669"/>
    <property type="project" value="UniProtKB-UniRule"/>
</dbReference>
<dbReference type="GO" id="GO:0046933">
    <property type="term" value="F:proton-transporting ATP synthase activity, rotational mechanism"/>
    <property type="evidence" value="ECO:0007669"/>
    <property type="project" value="UniProtKB-UniRule"/>
</dbReference>
<dbReference type="CDD" id="cd18113">
    <property type="entry name" value="ATP-synt_F1_alpha_C"/>
    <property type="match status" value="1"/>
</dbReference>
<dbReference type="CDD" id="cd18116">
    <property type="entry name" value="ATP-synt_F1_alpha_N"/>
    <property type="match status" value="1"/>
</dbReference>
<dbReference type="CDD" id="cd01132">
    <property type="entry name" value="F1-ATPase_alpha_CD"/>
    <property type="match status" value="1"/>
</dbReference>
<dbReference type="FunFam" id="1.20.150.20:FF:000001">
    <property type="entry name" value="ATP synthase subunit alpha"/>
    <property type="match status" value="1"/>
</dbReference>
<dbReference type="FunFam" id="2.40.30.20:FF:000001">
    <property type="entry name" value="ATP synthase subunit alpha"/>
    <property type="match status" value="1"/>
</dbReference>
<dbReference type="FunFam" id="3.40.50.300:FF:004039">
    <property type="entry name" value="ATP synthase subunit alpha, mitochondrial"/>
    <property type="match status" value="1"/>
</dbReference>
<dbReference type="Gene3D" id="2.40.30.20">
    <property type="match status" value="1"/>
</dbReference>
<dbReference type="Gene3D" id="1.20.150.20">
    <property type="entry name" value="ATP synthase alpha/beta chain, C-terminal domain"/>
    <property type="match status" value="1"/>
</dbReference>
<dbReference type="Gene3D" id="3.40.50.300">
    <property type="entry name" value="P-loop containing nucleotide triphosphate hydrolases"/>
    <property type="match status" value="1"/>
</dbReference>
<dbReference type="HAMAP" id="MF_01346">
    <property type="entry name" value="ATP_synth_alpha_bact"/>
    <property type="match status" value="1"/>
</dbReference>
<dbReference type="InterPro" id="IPR023366">
    <property type="entry name" value="ATP_synth_asu-like_sf"/>
</dbReference>
<dbReference type="InterPro" id="IPR000793">
    <property type="entry name" value="ATP_synth_asu_C"/>
</dbReference>
<dbReference type="InterPro" id="IPR038376">
    <property type="entry name" value="ATP_synth_asu_C_sf"/>
</dbReference>
<dbReference type="InterPro" id="IPR033732">
    <property type="entry name" value="ATP_synth_F1_a_nt-bd_dom"/>
</dbReference>
<dbReference type="InterPro" id="IPR005294">
    <property type="entry name" value="ATP_synth_F1_asu"/>
</dbReference>
<dbReference type="InterPro" id="IPR020003">
    <property type="entry name" value="ATPase_a/bsu_AS"/>
</dbReference>
<dbReference type="InterPro" id="IPR004100">
    <property type="entry name" value="ATPase_F1/V1/A1_a/bsu_N"/>
</dbReference>
<dbReference type="InterPro" id="IPR036121">
    <property type="entry name" value="ATPase_F1/V1/A1_a/bsu_N_sf"/>
</dbReference>
<dbReference type="InterPro" id="IPR000194">
    <property type="entry name" value="ATPase_F1/V1/A1_a/bsu_nucl-bd"/>
</dbReference>
<dbReference type="InterPro" id="IPR027417">
    <property type="entry name" value="P-loop_NTPase"/>
</dbReference>
<dbReference type="NCBIfam" id="TIGR00962">
    <property type="entry name" value="atpA"/>
    <property type="match status" value="1"/>
</dbReference>
<dbReference type="NCBIfam" id="NF009884">
    <property type="entry name" value="PRK13343.1"/>
    <property type="match status" value="1"/>
</dbReference>
<dbReference type="PANTHER" id="PTHR48082">
    <property type="entry name" value="ATP SYNTHASE SUBUNIT ALPHA, MITOCHONDRIAL"/>
    <property type="match status" value="1"/>
</dbReference>
<dbReference type="PANTHER" id="PTHR48082:SF2">
    <property type="entry name" value="ATP SYNTHASE SUBUNIT ALPHA, MITOCHONDRIAL"/>
    <property type="match status" value="1"/>
</dbReference>
<dbReference type="Pfam" id="PF00006">
    <property type="entry name" value="ATP-synt_ab"/>
    <property type="match status" value="1"/>
</dbReference>
<dbReference type="Pfam" id="PF00306">
    <property type="entry name" value="ATP-synt_ab_C"/>
    <property type="match status" value="1"/>
</dbReference>
<dbReference type="Pfam" id="PF02874">
    <property type="entry name" value="ATP-synt_ab_N"/>
    <property type="match status" value="1"/>
</dbReference>
<dbReference type="PIRSF" id="PIRSF039088">
    <property type="entry name" value="F_ATPase_subunit_alpha"/>
    <property type="match status" value="1"/>
</dbReference>
<dbReference type="SUPFAM" id="SSF47917">
    <property type="entry name" value="C-terminal domain of alpha and beta subunits of F1 ATP synthase"/>
    <property type="match status" value="1"/>
</dbReference>
<dbReference type="SUPFAM" id="SSF50615">
    <property type="entry name" value="N-terminal domain of alpha and beta subunits of F1 ATP synthase"/>
    <property type="match status" value="1"/>
</dbReference>
<dbReference type="SUPFAM" id="SSF52540">
    <property type="entry name" value="P-loop containing nucleoside triphosphate hydrolases"/>
    <property type="match status" value="1"/>
</dbReference>
<dbReference type="PROSITE" id="PS00152">
    <property type="entry name" value="ATPASE_ALPHA_BETA"/>
    <property type="match status" value="1"/>
</dbReference>
<keyword id="KW-0066">ATP synthesis</keyword>
<keyword id="KW-0067">ATP-binding</keyword>
<keyword id="KW-0997">Cell inner membrane</keyword>
<keyword id="KW-1003">Cell membrane</keyword>
<keyword id="KW-0139">CF(1)</keyword>
<keyword id="KW-0375">Hydrogen ion transport</keyword>
<keyword id="KW-0406">Ion transport</keyword>
<keyword id="KW-0472">Membrane</keyword>
<keyword id="KW-0547">Nucleotide-binding</keyword>
<keyword id="KW-1185">Reference proteome</keyword>
<keyword id="KW-1278">Translocase</keyword>
<keyword id="KW-0813">Transport</keyword>
<reference key="1">
    <citation type="journal article" date="2001" name="Proc. Natl. Acad. Sci. U.S.A.">
        <title>Complete genome sequence of Caulobacter crescentus.</title>
        <authorList>
            <person name="Nierman W.C."/>
            <person name="Feldblyum T.V."/>
            <person name="Laub M.T."/>
            <person name="Paulsen I.T."/>
            <person name="Nelson K.E."/>
            <person name="Eisen J.A."/>
            <person name="Heidelberg J.F."/>
            <person name="Alley M.R.K."/>
            <person name="Ohta N."/>
            <person name="Maddock J.R."/>
            <person name="Potocka I."/>
            <person name="Nelson W.C."/>
            <person name="Newton A."/>
            <person name="Stephens C."/>
            <person name="Phadke N.D."/>
            <person name="Ely B."/>
            <person name="DeBoy R.T."/>
            <person name="Dodson R.J."/>
            <person name="Durkin A.S."/>
            <person name="Gwinn M.L."/>
            <person name="Haft D.H."/>
            <person name="Kolonay J.F."/>
            <person name="Smit J."/>
            <person name="Craven M.B."/>
            <person name="Khouri H.M."/>
            <person name="Shetty J."/>
            <person name="Berry K.J."/>
            <person name="Utterback T.R."/>
            <person name="Tran K."/>
            <person name="Wolf A.M."/>
            <person name="Vamathevan J.J."/>
            <person name="Ermolaeva M.D."/>
            <person name="White O."/>
            <person name="Salzberg S.L."/>
            <person name="Venter J.C."/>
            <person name="Shapiro L."/>
            <person name="Fraser C.M."/>
        </authorList>
    </citation>
    <scope>NUCLEOTIDE SEQUENCE [LARGE SCALE GENOMIC DNA]</scope>
    <source>
        <strain>ATCC 19089 / CIP 103742 / CB 15</strain>
    </source>
</reference>
<name>ATPA_CAUVC</name>
<accession>Q9A2V7</accession>
<evidence type="ECO:0000255" key="1">
    <source>
        <dbReference type="HAMAP-Rule" id="MF_01346"/>
    </source>
</evidence>
<protein>
    <recommendedName>
        <fullName evidence="1">ATP synthase subunit alpha</fullName>
        <ecNumber evidence="1">7.1.2.2</ecNumber>
    </recommendedName>
    <alternativeName>
        <fullName evidence="1">ATP synthase F1 sector subunit alpha</fullName>
    </alternativeName>
    <alternativeName>
        <fullName evidence="1">F-ATPase subunit alpha</fullName>
    </alternativeName>
</protein>